<organism>
    <name type="scientific">Methanosarcina barkeri (strain Fusaro / DSM 804)</name>
    <dbReference type="NCBI Taxonomy" id="269797"/>
    <lineage>
        <taxon>Archaea</taxon>
        <taxon>Methanobacteriati</taxon>
        <taxon>Methanobacteriota</taxon>
        <taxon>Stenosarchaea group</taxon>
        <taxon>Methanomicrobia</taxon>
        <taxon>Methanosarcinales</taxon>
        <taxon>Methanosarcinaceae</taxon>
        <taxon>Methanosarcina</taxon>
    </lineage>
</organism>
<accession>Q46BJ4</accession>
<protein>
    <recommendedName>
        <fullName evidence="1">Protein Mbar_A1807</fullName>
    </recommendedName>
</protein>
<feature type="chain" id="PRO_1000082706" description="Protein Mbar_A1807">
    <location>
        <begin position="1"/>
        <end position="202"/>
    </location>
</feature>
<feature type="domain" description="AMMECR1" evidence="1">
    <location>
        <begin position="5"/>
        <end position="196"/>
    </location>
</feature>
<gene>
    <name type="ordered locus">Mbar_A1807</name>
</gene>
<reference key="1">
    <citation type="journal article" date="2006" name="J. Bacteriol.">
        <title>The Methanosarcina barkeri genome: comparative analysis with Methanosarcina acetivorans and Methanosarcina mazei reveals extensive rearrangement within methanosarcinal genomes.</title>
        <authorList>
            <person name="Maeder D.L."/>
            <person name="Anderson I."/>
            <person name="Brettin T.S."/>
            <person name="Bruce D.C."/>
            <person name="Gilna P."/>
            <person name="Han C.S."/>
            <person name="Lapidus A."/>
            <person name="Metcalf W.W."/>
            <person name="Saunders E."/>
            <person name="Tapia R."/>
            <person name="Sowers K.R."/>
        </authorList>
    </citation>
    <scope>NUCLEOTIDE SEQUENCE [LARGE SCALE GENOMIC DNA]</scope>
    <source>
        <strain>Fusaro / DSM 804</strain>
    </source>
</reference>
<proteinExistence type="inferred from homology"/>
<name>Y1807_METBF</name>
<sequence length="202" mass="22340">MLTDVEGRAAVKLARKTIESFLSEEKLPEPQELGFELSPVFGEKRGVFVTLTESGLLRGCIGHPFPDSRLEDAIMDSAISAATRDPRFPPVREDELNKIVVEVTILTQPEKINAPAEELPERIEVGKHGLIVKQGYCQGLLLPQVAPEYNMDSIEFLGHTCLKAGLLPDAWLKGAEVSCFEGQIFKEKEPCGEVLEENFSCE</sequence>
<dbReference type="EMBL" id="CP000099">
    <property type="protein sequence ID" value="AAZ70748.1"/>
    <property type="molecule type" value="Genomic_DNA"/>
</dbReference>
<dbReference type="SMR" id="Q46BJ4"/>
<dbReference type="STRING" id="269797.Mbar_A1807"/>
<dbReference type="PaxDb" id="269797-Mbar_A1807"/>
<dbReference type="KEGG" id="mba:Mbar_A1807"/>
<dbReference type="eggNOG" id="arCOG01336">
    <property type="taxonomic scope" value="Archaea"/>
</dbReference>
<dbReference type="HOGENOM" id="CLU_095686_1_1_2"/>
<dbReference type="OrthoDB" id="25187at2157"/>
<dbReference type="Gene3D" id="3.30.700.20">
    <property type="entry name" value="Hypothetical protein ph0010, domain 1"/>
    <property type="match status" value="1"/>
</dbReference>
<dbReference type="Gene3D" id="3.30.1490.150">
    <property type="entry name" value="Hypothetical protein ph0010, domain 2"/>
    <property type="match status" value="1"/>
</dbReference>
<dbReference type="HAMAP" id="MF_00645">
    <property type="entry name" value="AMMECR1"/>
    <property type="match status" value="1"/>
</dbReference>
<dbReference type="InterPro" id="IPR023473">
    <property type="entry name" value="AMMECR1"/>
</dbReference>
<dbReference type="InterPro" id="IPR036071">
    <property type="entry name" value="AMMECR1_dom_sf"/>
</dbReference>
<dbReference type="InterPro" id="IPR002733">
    <property type="entry name" value="AMMECR1_domain"/>
</dbReference>
<dbReference type="InterPro" id="IPR027485">
    <property type="entry name" value="AMMECR1_N"/>
</dbReference>
<dbReference type="InterPro" id="IPR027623">
    <property type="entry name" value="AmmeMemoSam_A"/>
</dbReference>
<dbReference type="InterPro" id="IPR023472">
    <property type="entry name" value="Uncharacterised_MJ0810"/>
</dbReference>
<dbReference type="NCBIfam" id="TIGR04335">
    <property type="entry name" value="AmmeMemoSam_A"/>
    <property type="match status" value="1"/>
</dbReference>
<dbReference type="NCBIfam" id="NF002000">
    <property type="entry name" value="PRK00801.1"/>
    <property type="match status" value="1"/>
</dbReference>
<dbReference type="NCBIfam" id="TIGR00296">
    <property type="entry name" value="TIGR00296 family protein"/>
    <property type="match status" value="1"/>
</dbReference>
<dbReference type="PANTHER" id="PTHR13016:SF0">
    <property type="entry name" value="AMME SYNDROME CANDIDATE GENE 1 PROTEIN"/>
    <property type="match status" value="1"/>
</dbReference>
<dbReference type="PANTHER" id="PTHR13016">
    <property type="entry name" value="AMMECR1 HOMOLOG"/>
    <property type="match status" value="1"/>
</dbReference>
<dbReference type="Pfam" id="PF01871">
    <property type="entry name" value="AMMECR1"/>
    <property type="match status" value="1"/>
</dbReference>
<dbReference type="SUPFAM" id="SSF143447">
    <property type="entry name" value="AMMECR1-like"/>
    <property type="match status" value="1"/>
</dbReference>
<dbReference type="PROSITE" id="PS51112">
    <property type="entry name" value="AMMECR1"/>
    <property type="match status" value="1"/>
</dbReference>
<evidence type="ECO:0000255" key="1">
    <source>
        <dbReference type="HAMAP-Rule" id="MF_00645"/>
    </source>
</evidence>